<name>Y540_METJA</name>
<proteinExistence type="predicted"/>
<feature type="chain" id="PRO_0000106921" description="Uncharacterized protein MJ0540">
    <location>
        <begin position="1"/>
        <end position="85"/>
    </location>
</feature>
<keyword id="KW-1185">Reference proteome</keyword>
<sequence length="85" mass="10174">MEEIIDVKNPKEVIEYLNNIDVDEYVEIYFGRVHVEGRLMHYNDGLIRLVHEKYGIIEVEIEKILDDLLELVHSNGEKRVVLRFY</sequence>
<protein>
    <recommendedName>
        <fullName>Uncharacterized protein MJ0540</fullName>
    </recommendedName>
</protein>
<dbReference type="EMBL" id="L77117">
    <property type="protein sequence ID" value="AAB98537.1"/>
    <property type="molecule type" value="Genomic_DNA"/>
</dbReference>
<dbReference type="PIR" id="D64367">
    <property type="entry name" value="D64367"/>
</dbReference>
<dbReference type="RefSeq" id="WP_010870044.1">
    <property type="nucleotide sequence ID" value="NC_000909.1"/>
</dbReference>
<dbReference type="FunCoup" id="Q57960">
    <property type="interactions" value="9"/>
</dbReference>
<dbReference type="STRING" id="243232.MJ_0540"/>
<dbReference type="PaxDb" id="243232-MJ_0540"/>
<dbReference type="EnsemblBacteria" id="AAB98537">
    <property type="protein sequence ID" value="AAB98537"/>
    <property type="gene ID" value="MJ_0540"/>
</dbReference>
<dbReference type="GeneID" id="1451405"/>
<dbReference type="KEGG" id="mja:MJ_0540"/>
<dbReference type="eggNOG" id="arCOG05038">
    <property type="taxonomic scope" value="Archaea"/>
</dbReference>
<dbReference type="HOGENOM" id="CLU_181218_0_0_2"/>
<dbReference type="InParanoid" id="Q57960"/>
<dbReference type="OrthoDB" id="65551at2157"/>
<dbReference type="Proteomes" id="UP000000805">
    <property type="component" value="Chromosome"/>
</dbReference>
<dbReference type="InterPro" id="IPR019208">
    <property type="entry name" value="DUF2097"/>
</dbReference>
<dbReference type="Pfam" id="PF09870">
    <property type="entry name" value="DUF2097"/>
    <property type="match status" value="1"/>
</dbReference>
<gene>
    <name type="ordered locus">MJ0540</name>
</gene>
<accession>Q57960</accession>
<organism>
    <name type="scientific">Methanocaldococcus jannaschii (strain ATCC 43067 / DSM 2661 / JAL-1 / JCM 10045 / NBRC 100440)</name>
    <name type="common">Methanococcus jannaschii</name>
    <dbReference type="NCBI Taxonomy" id="243232"/>
    <lineage>
        <taxon>Archaea</taxon>
        <taxon>Methanobacteriati</taxon>
        <taxon>Methanobacteriota</taxon>
        <taxon>Methanomada group</taxon>
        <taxon>Methanococci</taxon>
        <taxon>Methanococcales</taxon>
        <taxon>Methanocaldococcaceae</taxon>
        <taxon>Methanocaldococcus</taxon>
    </lineage>
</organism>
<reference key="1">
    <citation type="journal article" date="1996" name="Science">
        <title>Complete genome sequence of the methanogenic archaeon, Methanococcus jannaschii.</title>
        <authorList>
            <person name="Bult C.J."/>
            <person name="White O."/>
            <person name="Olsen G.J."/>
            <person name="Zhou L."/>
            <person name="Fleischmann R.D."/>
            <person name="Sutton G.G."/>
            <person name="Blake J.A."/>
            <person name="FitzGerald L.M."/>
            <person name="Clayton R.A."/>
            <person name="Gocayne J.D."/>
            <person name="Kerlavage A.R."/>
            <person name="Dougherty B.A."/>
            <person name="Tomb J.-F."/>
            <person name="Adams M.D."/>
            <person name="Reich C.I."/>
            <person name="Overbeek R."/>
            <person name="Kirkness E.F."/>
            <person name="Weinstock K.G."/>
            <person name="Merrick J.M."/>
            <person name="Glodek A."/>
            <person name="Scott J.L."/>
            <person name="Geoghagen N.S.M."/>
            <person name="Weidman J.F."/>
            <person name="Fuhrmann J.L."/>
            <person name="Nguyen D."/>
            <person name="Utterback T.R."/>
            <person name="Kelley J.M."/>
            <person name="Peterson J.D."/>
            <person name="Sadow P.W."/>
            <person name="Hanna M.C."/>
            <person name="Cotton M.D."/>
            <person name="Roberts K.M."/>
            <person name="Hurst M.A."/>
            <person name="Kaine B.P."/>
            <person name="Borodovsky M."/>
            <person name="Klenk H.-P."/>
            <person name="Fraser C.M."/>
            <person name="Smith H.O."/>
            <person name="Woese C.R."/>
            <person name="Venter J.C."/>
        </authorList>
    </citation>
    <scope>NUCLEOTIDE SEQUENCE [LARGE SCALE GENOMIC DNA]</scope>
    <source>
        <strain>ATCC 43067 / DSM 2661 / JAL-1 / JCM 10045 / NBRC 100440</strain>
    </source>
</reference>